<dbReference type="EMBL" id="M16443">
    <property type="protein sequence ID" value="AAA30878.1"/>
    <property type="molecule type" value="mRNA"/>
</dbReference>
<dbReference type="PIR" id="A28025">
    <property type="entry name" value="UNDG"/>
</dbReference>
<dbReference type="RefSeq" id="NP_001300803.1">
    <property type="nucleotide sequence ID" value="NM_001313874.1"/>
</dbReference>
<dbReference type="FunCoup" id="P10673">
    <property type="interactions" value="68"/>
</dbReference>
<dbReference type="STRING" id="9615.ENSCAFP00000008959"/>
<dbReference type="PaxDb" id="9612-ENSCAFP00000008959"/>
<dbReference type="Ensembl" id="ENSCAFT00000009648.5">
    <property type="protein sequence ID" value="ENSCAFP00000008959.3"/>
    <property type="gene ID" value="ENSCAFG00000005976.5"/>
</dbReference>
<dbReference type="Ensembl" id="ENSCAFT00030035712.1">
    <property type="protein sequence ID" value="ENSCAFP00030031144.1"/>
    <property type="gene ID" value="ENSCAFG00030019410.1"/>
</dbReference>
<dbReference type="Ensembl" id="ENSCAFT00040025804.1">
    <property type="protein sequence ID" value="ENSCAFP00040022440.1"/>
    <property type="gene ID" value="ENSCAFG00040013954.1"/>
</dbReference>
<dbReference type="Ensembl" id="ENSCAFT00845022032.1">
    <property type="protein sequence ID" value="ENSCAFP00845017320.1"/>
    <property type="gene ID" value="ENSCAFG00845012392.1"/>
</dbReference>
<dbReference type="GeneID" id="611687"/>
<dbReference type="KEGG" id="cfa:611687"/>
<dbReference type="CTD" id="4922"/>
<dbReference type="VEuPathDB" id="HostDB:ENSCAFG00845012392"/>
<dbReference type="VGNC" id="VGNC:44013">
    <property type="gene designation" value="NTS"/>
</dbReference>
<dbReference type="eggNOG" id="ENOG502RYW6">
    <property type="taxonomic scope" value="Eukaryota"/>
</dbReference>
<dbReference type="GeneTree" id="ENSGT00640000091574"/>
<dbReference type="HOGENOM" id="CLU_133874_0_0_1"/>
<dbReference type="InParanoid" id="P10673"/>
<dbReference type="OMA" id="ISSWKMT"/>
<dbReference type="OrthoDB" id="9929102at2759"/>
<dbReference type="TreeFam" id="TF330765"/>
<dbReference type="Reactome" id="R-CFA-375276">
    <property type="pathway name" value="Peptide ligand-binding receptors"/>
</dbReference>
<dbReference type="Reactome" id="R-CFA-416476">
    <property type="pathway name" value="G alpha (q) signalling events"/>
</dbReference>
<dbReference type="Proteomes" id="UP000002254">
    <property type="component" value="Chromosome 15"/>
</dbReference>
<dbReference type="Proteomes" id="UP000694429">
    <property type="component" value="Chromosome 15"/>
</dbReference>
<dbReference type="Proteomes" id="UP000694542">
    <property type="component" value="Chromosome 15"/>
</dbReference>
<dbReference type="Proteomes" id="UP000805418">
    <property type="component" value="Chromosome 15"/>
</dbReference>
<dbReference type="Bgee" id="ENSCAFG00000005976">
    <property type="expression patterns" value="Expressed in jejunum and 32 other cell types or tissues"/>
</dbReference>
<dbReference type="GO" id="GO:0043679">
    <property type="term" value="C:axon terminus"/>
    <property type="evidence" value="ECO:0000318"/>
    <property type="project" value="GO_Central"/>
</dbReference>
<dbReference type="GO" id="GO:0005576">
    <property type="term" value="C:extracellular region"/>
    <property type="evidence" value="ECO:0007669"/>
    <property type="project" value="UniProtKB-SubCell"/>
</dbReference>
<dbReference type="GO" id="GO:0030133">
    <property type="term" value="C:transport vesicle"/>
    <property type="evidence" value="ECO:0007669"/>
    <property type="project" value="UniProtKB-SubCell"/>
</dbReference>
<dbReference type="GO" id="GO:0005184">
    <property type="term" value="F:neuropeptide hormone activity"/>
    <property type="evidence" value="ECO:0007669"/>
    <property type="project" value="InterPro"/>
</dbReference>
<dbReference type="GO" id="GO:0071855">
    <property type="term" value="F:neuropeptide receptor binding"/>
    <property type="evidence" value="ECO:0007669"/>
    <property type="project" value="Ensembl"/>
</dbReference>
<dbReference type="GO" id="GO:0097746">
    <property type="term" value="P:blood vessel diameter maintenance"/>
    <property type="evidence" value="ECO:0007669"/>
    <property type="project" value="UniProtKB-KW"/>
</dbReference>
<dbReference type="GO" id="GO:0010629">
    <property type="term" value="P:negative regulation of gene expression"/>
    <property type="evidence" value="ECO:0007669"/>
    <property type="project" value="Ensembl"/>
</dbReference>
<dbReference type="GO" id="GO:0007218">
    <property type="term" value="P:neuropeptide signaling pathway"/>
    <property type="evidence" value="ECO:0007669"/>
    <property type="project" value="Ensembl"/>
</dbReference>
<dbReference type="GO" id="GO:0010628">
    <property type="term" value="P:positive regulation of gene expression"/>
    <property type="evidence" value="ECO:0007669"/>
    <property type="project" value="Ensembl"/>
</dbReference>
<dbReference type="GO" id="GO:0051897">
    <property type="term" value="P:positive regulation of phosphatidylinositol 3-kinase/protein kinase B signal transduction"/>
    <property type="evidence" value="ECO:0007669"/>
    <property type="project" value="Ensembl"/>
</dbReference>
<dbReference type="InterPro" id="IPR008055">
    <property type="entry name" value="NeurotensiN"/>
</dbReference>
<dbReference type="PANTHER" id="PTHR15356">
    <property type="entry name" value="NEUROTENSIN/NEUROMEDIN N"/>
    <property type="match status" value="1"/>
</dbReference>
<dbReference type="PANTHER" id="PTHR15356:SF0">
    <property type="entry name" value="NEUROTENSIN_NEUROMEDIN N"/>
    <property type="match status" value="1"/>
</dbReference>
<dbReference type="Pfam" id="PF07421">
    <property type="entry name" value="Pro-NT_NN"/>
    <property type="match status" value="1"/>
</dbReference>
<dbReference type="PRINTS" id="PR01668">
    <property type="entry name" value="NEUROTENSIN"/>
</dbReference>
<gene>
    <name type="primary">NTS</name>
</gene>
<proteinExistence type="evidence at protein level"/>
<protein>
    <recommendedName>
        <fullName>Neurotensin/neuromedin N</fullName>
    </recommendedName>
    <component>
        <recommendedName>
            <fullName>Large neuromedin N</fullName>
        </recommendedName>
        <alternativeName>
            <fullName>NmN-125</fullName>
        </alternativeName>
    </component>
    <component>
        <recommendedName>
            <fullName>Neuromedin N</fullName>
            <shortName>NN</shortName>
            <shortName>NmN</shortName>
        </recommendedName>
    </component>
    <component>
        <recommendedName>
            <fullName>Neurotensin</fullName>
            <shortName>NT</shortName>
        </recommendedName>
    </component>
    <component>
        <recommendedName>
            <fullName>NT-tail</fullName>
        </recommendedName>
    </component>
    <component>
        <recommendedName>
            <fullName>Tail peptide</fullName>
        </recommendedName>
    </component>
</protein>
<feature type="signal peptide" evidence="3">
    <location>
        <begin position="1"/>
        <end position="23"/>
    </location>
</feature>
<feature type="chain" id="PRO_0000019517" description="Large neuromedin N">
    <location>
        <begin position="24"/>
        <end position="148"/>
    </location>
</feature>
<feature type="peptide" id="PRO_0000019518" description="Neuromedin N">
    <location>
        <begin position="143"/>
        <end position="148"/>
    </location>
</feature>
<feature type="peptide" id="PRO_0000019519" description="NT-tail">
    <location>
        <begin position="151"/>
        <end position="170"/>
    </location>
</feature>
<feature type="peptide" id="PRO_0000019520" description="Neurotensin">
    <location>
        <begin position="151"/>
        <end position="163"/>
    </location>
</feature>
<feature type="peptide" id="PRO_0000019521" description="Tail peptide" evidence="2">
    <location>
        <begin position="166"/>
        <end position="170"/>
    </location>
</feature>
<feature type="site" description="Cleavage; by MME" evidence="1">
    <location>
        <begin position="160"/>
        <end position="161"/>
    </location>
</feature>
<feature type="site" description="Cleavage; by ACE and MME" evidence="1">
    <location>
        <begin position="161"/>
        <end position="162"/>
    </location>
</feature>
<evidence type="ECO:0000250" key="1">
    <source>
        <dbReference type="UniProtKB" id="P30990"/>
    </source>
</evidence>
<evidence type="ECO:0000255" key="2"/>
<evidence type="ECO:0000269" key="3">
    <source>
    </source>
</evidence>
<evidence type="ECO:0000305" key="4"/>
<name>NEUT_CANLF</name>
<reference key="1">
    <citation type="journal article" date="1987" name="Proc. Natl. Acad. Sci. U.S.A.">
        <title>Cloning and sequence analysis of cDNA for the canine neurotensin/neuromedin N precursor.</title>
        <authorList>
            <person name="Dobner P.R."/>
            <person name="Barber D.L."/>
            <person name="Villa-Komaroff L."/>
            <person name="McKiernan C."/>
        </authorList>
    </citation>
    <scope>NUCLEOTIDE SEQUENCE [MRNA]</scope>
</reference>
<reference key="2">
    <citation type="journal article" date="1990" name="J. Biol. Chem.">
        <title>Differential processing of neurotensin/neuromedin N precursor(s) in canine brain and intestine.</title>
        <authorList>
            <person name="Carraway R.E."/>
            <person name="Mitra S.P."/>
        </authorList>
    </citation>
    <scope>PROTEIN SEQUENCE OF 128-148</scope>
</reference>
<reference key="3">
    <citation type="journal article" date="1991" name="Biochem. Biophys. Res. Commun.">
        <title>Purification of large neuromedin N (NMN) from canine intestine and its identification as NMN-125.</title>
        <authorList>
            <person name="Carraway R.E."/>
            <person name="Mitra S.P."/>
        </authorList>
    </citation>
    <scope>PROTEIN SEQUENCE OF 24-43</scope>
    <source>
        <tissue>Intestine</tissue>
    </source>
</reference>
<reference key="4">
    <citation type="journal article" date="1992" name="Peptides">
        <title>Isolation and quantitation of several new peptides from the canine neurotensin/neuromedin N precursor.</title>
        <authorList>
            <person name="Carraway R.E."/>
            <person name="Mitra S.P."/>
            <person name="Salmonsen R."/>
        </authorList>
    </citation>
    <scope>PROTEIN SEQUENCE OF 151-170</scope>
    <source>
        <tissue>Ileum</tissue>
    </source>
</reference>
<sequence>MMAGMKIQLVCMILLAFSSWSLCSDSEEEMKALEADLLTNMHTSKISKASVSSWKMTLLNVCSFVNNLNSQAEETGEFREEELITRRKFPTALDGFSLEAMLTIYQLQKICHSRAFQQWELIQEDVLDAGNDKNEKEEVIKRKIPYILKRQLYENKPRRPYILKRGSYYY</sequence>
<organism>
    <name type="scientific">Canis lupus familiaris</name>
    <name type="common">Dog</name>
    <name type="synonym">Canis familiaris</name>
    <dbReference type="NCBI Taxonomy" id="9615"/>
    <lineage>
        <taxon>Eukaryota</taxon>
        <taxon>Metazoa</taxon>
        <taxon>Chordata</taxon>
        <taxon>Craniata</taxon>
        <taxon>Vertebrata</taxon>
        <taxon>Euteleostomi</taxon>
        <taxon>Mammalia</taxon>
        <taxon>Eutheria</taxon>
        <taxon>Laurasiatheria</taxon>
        <taxon>Carnivora</taxon>
        <taxon>Caniformia</taxon>
        <taxon>Canidae</taxon>
        <taxon>Canis</taxon>
    </lineage>
</organism>
<comment type="function">
    <text>Neurotensin may play an endocrine or paracrine role in the regulation of fat metabolism. It causes contraction of smooth muscle.</text>
</comment>
<comment type="subunit">
    <text evidence="1">Interacts with NTSR1. Interacts with SORT1. Interacts with SORL1.</text>
</comment>
<comment type="subcellular location">
    <subcellularLocation>
        <location>Secreted</location>
    </subcellularLocation>
    <subcellularLocation>
        <location>Cytoplasmic vesicle</location>
        <location>Secretory vesicle</location>
    </subcellularLocation>
    <text>Packaged within secretory vesicles.</text>
</comment>
<comment type="PTM">
    <molecule>Neurotensin</molecule>
    <text evidence="1">Neurotensin is cleaved and degraded by Angiotensin-converting enzyme (ACE) and neprilysin (MME).</text>
</comment>
<comment type="similarity">
    <text evidence="4">Belongs to the neurotensin family.</text>
</comment>
<accession>P10673</accession>
<accession>Q9TS28</accession>
<keyword id="KW-0165">Cleavage on pair of basic residues</keyword>
<keyword id="KW-0968">Cytoplasmic vesicle</keyword>
<keyword id="KW-0903">Direct protein sequencing</keyword>
<keyword id="KW-1185">Reference proteome</keyword>
<keyword id="KW-0964">Secreted</keyword>
<keyword id="KW-0732">Signal</keyword>
<keyword id="KW-0838">Vasoactive</keyword>